<name>PCRA_STAAS</name>
<protein>
    <recommendedName>
        <fullName>ATP-dependent DNA helicase PcrA</fullName>
        <ecNumber>5.6.2.4</ecNumber>
    </recommendedName>
    <alternativeName>
        <fullName evidence="5">DNA 3'-5' helicase PcrA</fullName>
    </alternativeName>
</protein>
<evidence type="ECO:0000250" key="1"/>
<evidence type="ECO:0000255" key="2">
    <source>
        <dbReference type="PROSITE-ProRule" id="PRU00560"/>
    </source>
</evidence>
<evidence type="ECO:0000255" key="3">
    <source>
        <dbReference type="PROSITE-ProRule" id="PRU00617"/>
    </source>
</evidence>
<evidence type="ECO:0000256" key="4">
    <source>
        <dbReference type="SAM" id="MobiDB-lite"/>
    </source>
</evidence>
<evidence type="ECO:0000305" key="5"/>
<comment type="function">
    <text evidence="1">Essential helicase.</text>
</comment>
<comment type="catalytic activity">
    <reaction>
        <text>Couples ATP hydrolysis with the unwinding of duplex DNA by translocating in the 3'-5' direction.</text>
        <dbReference type="EC" id="5.6.2.4"/>
    </reaction>
</comment>
<comment type="catalytic activity">
    <reaction>
        <text>ATP + H2O = ADP + phosphate + H(+)</text>
        <dbReference type="Rhea" id="RHEA:13065"/>
        <dbReference type="ChEBI" id="CHEBI:15377"/>
        <dbReference type="ChEBI" id="CHEBI:15378"/>
        <dbReference type="ChEBI" id="CHEBI:30616"/>
        <dbReference type="ChEBI" id="CHEBI:43474"/>
        <dbReference type="ChEBI" id="CHEBI:456216"/>
        <dbReference type="EC" id="5.6.2.4"/>
    </reaction>
</comment>
<comment type="similarity">
    <text evidence="5">Belongs to the helicase family. UvrD subfamily.</text>
</comment>
<feature type="chain" id="PRO_0000102060" description="ATP-dependent DNA helicase PcrA">
    <location>
        <begin position="1"/>
        <end position="730"/>
    </location>
</feature>
<feature type="domain" description="UvrD-like helicase ATP-binding" evidence="2">
    <location>
        <begin position="6"/>
        <end position="285"/>
    </location>
</feature>
<feature type="domain" description="UvrD-like helicase C-terminal" evidence="3">
    <location>
        <begin position="286"/>
        <end position="560"/>
    </location>
</feature>
<feature type="region of interest" description="Disordered" evidence="4">
    <location>
        <begin position="641"/>
        <end position="668"/>
    </location>
</feature>
<feature type="compositionally biased region" description="Polar residues" evidence="4">
    <location>
        <begin position="641"/>
        <end position="651"/>
    </location>
</feature>
<feature type="binding site" evidence="2">
    <location>
        <begin position="30"/>
        <end position="35"/>
    </location>
    <ligand>
        <name>ATP</name>
        <dbReference type="ChEBI" id="CHEBI:30616"/>
    </ligand>
</feature>
<feature type="binding site" evidence="1">
    <location>
        <position position="283"/>
    </location>
    <ligand>
        <name>ATP</name>
        <dbReference type="ChEBI" id="CHEBI:30616"/>
    </ligand>
</feature>
<dbReference type="EC" id="5.6.2.4"/>
<dbReference type="EMBL" id="BX571857">
    <property type="protein sequence ID" value="CAG43633.1"/>
    <property type="molecule type" value="Genomic_DNA"/>
</dbReference>
<dbReference type="RefSeq" id="WP_000992921.1">
    <property type="nucleotide sequence ID" value="NC_002953.3"/>
</dbReference>
<dbReference type="SMR" id="Q6G828"/>
<dbReference type="KEGG" id="sas:SAS1828"/>
<dbReference type="HOGENOM" id="CLU_004585_5_2_9"/>
<dbReference type="GO" id="GO:0005829">
    <property type="term" value="C:cytosol"/>
    <property type="evidence" value="ECO:0007669"/>
    <property type="project" value="TreeGrafter"/>
</dbReference>
<dbReference type="GO" id="GO:0033202">
    <property type="term" value="C:DNA helicase complex"/>
    <property type="evidence" value="ECO:0007669"/>
    <property type="project" value="TreeGrafter"/>
</dbReference>
<dbReference type="GO" id="GO:0043138">
    <property type="term" value="F:3'-5' DNA helicase activity"/>
    <property type="evidence" value="ECO:0007669"/>
    <property type="project" value="TreeGrafter"/>
</dbReference>
<dbReference type="GO" id="GO:0005524">
    <property type="term" value="F:ATP binding"/>
    <property type="evidence" value="ECO:0007669"/>
    <property type="project" value="UniProtKB-KW"/>
</dbReference>
<dbReference type="GO" id="GO:0016887">
    <property type="term" value="F:ATP hydrolysis activity"/>
    <property type="evidence" value="ECO:0007669"/>
    <property type="project" value="RHEA"/>
</dbReference>
<dbReference type="GO" id="GO:0003677">
    <property type="term" value="F:DNA binding"/>
    <property type="evidence" value="ECO:0007669"/>
    <property type="project" value="UniProtKB-KW"/>
</dbReference>
<dbReference type="GO" id="GO:0006260">
    <property type="term" value="P:DNA replication"/>
    <property type="evidence" value="ECO:0007669"/>
    <property type="project" value="InterPro"/>
</dbReference>
<dbReference type="GO" id="GO:0000725">
    <property type="term" value="P:recombinational repair"/>
    <property type="evidence" value="ECO:0007669"/>
    <property type="project" value="TreeGrafter"/>
</dbReference>
<dbReference type="CDD" id="cd17932">
    <property type="entry name" value="DEXQc_UvrD"/>
    <property type="match status" value="1"/>
</dbReference>
<dbReference type="CDD" id="cd18807">
    <property type="entry name" value="SF1_C_UvrD"/>
    <property type="match status" value="1"/>
</dbReference>
<dbReference type="FunFam" id="1.10.10.160:FF:000001">
    <property type="entry name" value="ATP-dependent DNA helicase"/>
    <property type="match status" value="1"/>
</dbReference>
<dbReference type="FunFam" id="1.10.486.10:FF:000003">
    <property type="entry name" value="ATP-dependent DNA helicase"/>
    <property type="match status" value="1"/>
</dbReference>
<dbReference type="Gene3D" id="1.10.10.160">
    <property type="match status" value="1"/>
</dbReference>
<dbReference type="Gene3D" id="3.40.50.300">
    <property type="entry name" value="P-loop containing nucleotide triphosphate hydrolases"/>
    <property type="match status" value="2"/>
</dbReference>
<dbReference type="Gene3D" id="1.10.486.10">
    <property type="entry name" value="PCRA, domain 4"/>
    <property type="match status" value="1"/>
</dbReference>
<dbReference type="InterPro" id="IPR005751">
    <property type="entry name" value="ATP-dep_DNA_helicase_PcrA"/>
</dbReference>
<dbReference type="InterPro" id="IPR013986">
    <property type="entry name" value="DExx_box_DNA_helicase_dom_sf"/>
</dbReference>
<dbReference type="InterPro" id="IPR014017">
    <property type="entry name" value="DNA_helicase_UvrD-like_C"/>
</dbReference>
<dbReference type="InterPro" id="IPR000212">
    <property type="entry name" value="DNA_helicase_UvrD/REP"/>
</dbReference>
<dbReference type="InterPro" id="IPR027417">
    <property type="entry name" value="P-loop_NTPase"/>
</dbReference>
<dbReference type="InterPro" id="IPR014016">
    <property type="entry name" value="UvrD-like_ATP-bd"/>
</dbReference>
<dbReference type="NCBIfam" id="TIGR01073">
    <property type="entry name" value="pcrA"/>
    <property type="match status" value="1"/>
</dbReference>
<dbReference type="PANTHER" id="PTHR11070:SF2">
    <property type="entry name" value="ATP-DEPENDENT DNA HELICASE SRS2"/>
    <property type="match status" value="1"/>
</dbReference>
<dbReference type="PANTHER" id="PTHR11070">
    <property type="entry name" value="UVRD / RECB / PCRA DNA HELICASE FAMILY MEMBER"/>
    <property type="match status" value="1"/>
</dbReference>
<dbReference type="Pfam" id="PF21196">
    <property type="entry name" value="PcrA_UvrD_tudor"/>
    <property type="match status" value="1"/>
</dbReference>
<dbReference type="Pfam" id="PF00580">
    <property type="entry name" value="UvrD-helicase"/>
    <property type="match status" value="1"/>
</dbReference>
<dbReference type="Pfam" id="PF13361">
    <property type="entry name" value="UvrD_C"/>
    <property type="match status" value="1"/>
</dbReference>
<dbReference type="SUPFAM" id="SSF52540">
    <property type="entry name" value="P-loop containing nucleoside triphosphate hydrolases"/>
    <property type="match status" value="1"/>
</dbReference>
<dbReference type="PROSITE" id="PS51198">
    <property type="entry name" value="UVRD_HELICASE_ATP_BIND"/>
    <property type="match status" value="1"/>
</dbReference>
<dbReference type="PROSITE" id="PS51217">
    <property type="entry name" value="UVRD_HELICASE_CTER"/>
    <property type="match status" value="1"/>
</dbReference>
<reference key="1">
    <citation type="journal article" date="2004" name="Proc. Natl. Acad. Sci. U.S.A.">
        <title>Complete genomes of two clinical Staphylococcus aureus strains: evidence for the rapid evolution of virulence and drug resistance.</title>
        <authorList>
            <person name="Holden M.T.G."/>
            <person name="Feil E.J."/>
            <person name="Lindsay J.A."/>
            <person name="Peacock S.J."/>
            <person name="Day N.P.J."/>
            <person name="Enright M.C."/>
            <person name="Foster T.J."/>
            <person name="Moore C.E."/>
            <person name="Hurst L."/>
            <person name="Atkin R."/>
            <person name="Barron A."/>
            <person name="Bason N."/>
            <person name="Bentley S.D."/>
            <person name="Chillingworth C."/>
            <person name="Chillingworth T."/>
            <person name="Churcher C."/>
            <person name="Clark L."/>
            <person name="Corton C."/>
            <person name="Cronin A."/>
            <person name="Doggett J."/>
            <person name="Dowd L."/>
            <person name="Feltwell T."/>
            <person name="Hance Z."/>
            <person name="Harris B."/>
            <person name="Hauser H."/>
            <person name="Holroyd S."/>
            <person name="Jagels K."/>
            <person name="James K.D."/>
            <person name="Lennard N."/>
            <person name="Line A."/>
            <person name="Mayes R."/>
            <person name="Moule S."/>
            <person name="Mungall K."/>
            <person name="Ormond D."/>
            <person name="Quail M.A."/>
            <person name="Rabbinowitsch E."/>
            <person name="Rutherford K.M."/>
            <person name="Sanders M."/>
            <person name="Sharp S."/>
            <person name="Simmonds M."/>
            <person name="Stevens K."/>
            <person name="Whitehead S."/>
            <person name="Barrell B.G."/>
            <person name="Spratt B.G."/>
            <person name="Parkhill J."/>
        </authorList>
    </citation>
    <scope>NUCLEOTIDE SEQUENCE [LARGE SCALE GENOMIC DNA]</scope>
    <source>
        <strain>MSSA476</strain>
    </source>
</reference>
<sequence>MNALLNHMNTEQSEAVKTTEGPLLIMAGAGSGKTRVLTHRIAYLLDEKDVSPYNVLAITFTNKAAREMKERVQKLVGDQAEVIWMSTFHSMCVRILRRDADRIGIERNFTIIDPTDQKSVIKDVLKNENIDSKKFEPRMFIGAISNLKNELKTPADAQKEATDYHSQMVATVYSGYQRQLSRNEALDFDDLIMTTINLFERVPEVLEYYQNKFQYIHVDEYQDTNKAQYTLVKLLASKFKNLCVVGDSDQSIYGWRGADIQNILSFEKDYPEANTIFLEQNYRSTKTILNAANEVIKNNSERKPKGLWTANTNGEKIHYYEAMTERDEAEFVIREIMKHQRNGKKYQDMAILYRTNAQSRVLEETFMKSNMPYTMVGGQKFYDRKEIKDLLSYLRIIANSNDDISLQRIINVPKRGVGPSSVEKVQNYALQNNISMFDALGEADFIGLSKKVTQECLNFYELIQSLIKEQEFLEIHEIVDEVLQKSGYREMLERENTLESRSRLENIDEFMSVPKDYEENTPLEEQSLINFLTDLSLVADIDEADTENGVTLMTMHSAKGLEFPIVFIMGMEESLFPHIRAIKSEDDHEMQEERRICYVAITRAEEVLYITHATSRMLFGRPQSNMPSRFLKEIPESLLENHSSGKRQTIQPKAKPFAKRGFSQRTTSTKKQVLSSDWNVGDKVMHKAWGEGMVSNVNEKNGSIELDIIFKSQGPKRLLAQFAPIEKKED</sequence>
<keyword id="KW-0067">ATP-binding</keyword>
<keyword id="KW-0238">DNA-binding</keyword>
<keyword id="KW-0347">Helicase</keyword>
<keyword id="KW-0378">Hydrolase</keyword>
<keyword id="KW-0413">Isomerase</keyword>
<keyword id="KW-0547">Nucleotide-binding</keyword>
<gene>
    <name type="primary">pcrA</name>
    <name type="ordered locus">SAS1828</name>
</gene>
<proteinExistence type="inferred from homology"/>
<accession>Q6G828</accession>
<organism>
    <name type="scientific">Staphylococcus aureus (strain MSSA476)</name>
    <dbReference type="NCBI Taxonomy" id="282459"/>
    <lineage>
        <taxon>Bacteria</taxon>
        <taxon>Bacillati</taxon>
        <taxon>Bacillota</taxon>
        <taxon>Bacilli</taxon>
        <taxon>Bacillales</taxon>
        <taxon>Staphylococcaceae</taxon>
        <taxon>Staphylococcus</taxon>
    </lineage>
</organism>